<comment type="function">
    <text evidence="4">Membrane-bound phosphatidylinositol-4 kinase (PI4-kinase) that catalyzes the phosphorylation of phosphatidylinositol (PI) to phosphatidylinositol 4-phosphate (PI4P), a lipid that plays important roles in endocytosis, Golgi function, protein sorting and membrane trafficking. Besides, phosphorylation of phosphatidylinositol (PI) to phosphatidylinositol 4-phosphate (PI4P) is the first committed step in the generation of phosphatidylinositol 4,5-bisphosphate (PIP2), a precursor of the second messenger inositol 1,4,5-trisphosphate (InsP3).</text>
</comment>
<comment type="catalytic activity">
    <reaction evidence="4">
        <text>a 1,2-diacyl-sn-glycero-3-phospho-(1D-myo-inositol) + ATP = a 1,2-diacyl-sn-glycero-3-phospho-(1D-myo-inositol 4-phosphate) + ADP + H(+)</text>
        <dbReference type="Rhea" id="RHEA:19877"/>
        <dbReference type="ChEBI" id="CHEBI:15378"/>
        <dbReference type="ChEBI" id="CHEBI:30616"/>
        <dbReference type="ChEBI" id="CHEBI:57880"/>
        <dbReference type="ChEBI" id="CHEBI:58178"/>
        <dbReference type="ChEBI" id="CHEBI:456216"/>
        <dbReference type="EC" id="2.7.1.67"/>
    </reaction>
</comment>
<comment type="subcellular location">
    <subcellularLocation>
        <location evidence="4">Golgi apparatus</location>
        <location evidence="4">trans-Golgi network membrane</location>
        <topology evidence="4">Lipid-anchor</topology>
    </subcellularLocation>
    <subcellularLocation>
        <location evidence="4">Membrane raft</location>
    </subcellularLocation>
    <subcellularLocation>
        <location evidence="3">Endosome</location>
    </subcellularLocation>
    <subcellularLocation>
        <location evidence="4">Endosome membrane</location>
    </subcellularLocation>
    <subcellularLocation>
        <location evidence="3">Cytoplasmic vesicle</location>
    </subcellularLocation>
    <subcellularLocation>
        <location evidence="2">Cell projection</location>
        <location evidence="2">Dendrite</location>
    </subcellularLocation>
    <subcellularLocation>
        <location evidence="2">Presynaptic cell membrane</location>
    </subcellularLocation>
    <subcellularLocation>
        <location evidence="2">Synapse</location>
        <location evidence="2">Synaptosome</location>
    </subcellularLocation>
    <subcellularLocation>
        <location evidence="2">Mitochondrion</location>
    </subcellularLocation>
    <subcellularLocation>
        <location evidence="2">Membrane</location>
    </subcellularLocation>
    <subcellularLocation>
        <location evidence="4">Cell membrane</location>
    </subcellularLocation>
    <subcellularLocation>
        <location evidence="2">Perikaryon</location>
    </subcellularLocation>
    <subcellularLocation>
        <location evidence="2">Cell projection</location>
        <location evidence="2">Neuron projection</location>
    </subcellularLocation>
</comment>
<comment type="similarity">
    <text evidence="7">Belongs to the PI3/PI4-kinase family. Type II PI4K subfamily.</text>
</comment>
<name>P4K2A_XENLA</name>
<sequence>MDETSPLVSPDRDQTEYSYQSQCSPGATVPLSPNGRFSALPGVVVRIPGTATSCGSAASGPSPPGSPCDQERQPLLERSQTRAAAAQAEREMNKFPDDPAFAEVVKKAEKAIMRDILPERISQGSSGSYFVKDEQGEIIAVFKPKNEEPYGQLNPKWTKWLQKLCCPCCFGRDCLVLNQGYLSEAGASLVDQKLDLNIVPRTKVVFLASETFNYSAIDRVKSRGKRLALEKVPKVGQRFNRIGLPPKVGSFQIFVKSYKDADYWLRRFEADPLPENTNRQLQLQFERLVVLDYIIRNTDRGNDNWLIKYDCPMDSASARDDWVMVKEPVIKIAAIDNGLAFPLKHPDSWRAYPFYWAWLPQAKIQFSQEIKDLILPKISDPNFVKDLEEDLYELFKKDQGFDRGQFRKQIAVMRGQILNLTQAMKDGKSPLQLVQTPPVIVETARSHQKSTSESYTQSFQSRKPFFSWW</sequence>
<feature type="chain" id="PRO_0000285162" description="Phosphatidylinositol 4-kinase type 2-alpha">
    <location>
        <begin position="1"/>
        <end position="469"/>
    </location>
</feature>
<feature type="domain" description="PI3K/PI4K catalytic" evidence="5">
    <location>
        <begin position="115"/>
        <end position="443"/>
    </location>
</feature>
<feature type="region of interest" description="Disordered" evidence="6">
    <location>
        <begin position="1"/>
        <end position="30"/>
    </location>
</feature>
<feature type="region of interest" description="Disordered" evidence="6">
    <location>
        <begin position="50"/>
        <end position="72"/>
    </location>
</feature>
<feature type="region of interest" description="G-loop" evidence="5">
    <location>
        <begin position="121"/>
        <end position="127"/>
    </location>
</feature>
<feature type="region of interest" description="Important for substrate binding" evidence="4">
    <location>
        <begin position="148"/>
        <end position="150"/>
    </location>
</feature>
<feature type="region of interest" description="Important for interaction with membranes" evidence="4">
    <location>
        <begin position="156"/>
        <end position="169"/>
    </location>
</feature>
<feature type="region of interest" description="Important for interaction with membranes" evidence="4">
    <location>
        <begin position="259"/>
        <end position="267"/>
    </location>
</feature>
<feature type="region of interest" description="Catalytic loop" evidence="5">
    <location>
        <begin position="296"/>
        <end position="304"/>
    </location>
</feature>
<feature type="region of interest" description="Activation loop" evidence="5">
    <location>
        <begin position="334"/>
        <end position="354"/>
    </location>
</feature>
<feature type="region of interest" description="Important for interaction with membranes" evidence="4">
    <location>
        <begin position="349"/>
        <end position="358"/>
    </location>
</feature>
<feature type="compositionally biased region" description="Polar residues" evidence="6">
    <location>
        <begin position="16"/>
        <end position="25"/>
    </location>
</feature>
<feature type="compositionally biased region" description="Low complexity" evidence="6">
    <location>
        <begin position="50"/>
        <end position="60"/>
    </location>
</feature>
<feature type="binding site" evidence="4">
    <location>
        <begin position="122"/>
        <end position="128"/>
    </location>
    <ligand>
        <name>ATP</name>
        <dbReference type="ChEBI" id="CHEBI:30616"/>
    </ligand>
</feature>
<feature type="binding site" evidence="4">
    <location>
        <position position="143"/>
    </location>
    <ligand>
        <name>ATP</name>
        <dbReference type="ChEBI" id="CHEBI:30616"/>
    </ligand>
</feature>
<feature type="binding site" evidence="4">
    <location>
        <begin position="252"/>
        <end position="255"/>
    </location>
    <ligand>
        <name>ATP</name>
        <dbReference type="ChEBI" id="CHEBI:30616"/>
    </ligand>
</feature>
<feature type="binding site" evidence="4">
    <location>
        <position position="336"/>
    </location>
    <ligand>
        <name>ATP</name>
        <dbReference type="ChEBI" id="CHEBI:30616"/>
    </ligand>
</feature>
<feature type="lipid moiety-binding region" description="S-palmitoyl cysteine" evidence="1">
    <location>
        <position position="165"/>
    </location>
</feature>
<feature type="lipid moiety-binding region" description="S-palmitoyl cysteine" evidence="1">
    <location>
        <position position="166"/>
    </location>
</feature>
<feature type="lipid moiety-binding region" description="S-palmitoyl cysteine" evidence="1">
    <location>
        <position position="168"/>
    </location>
</feature>
<feature type="lipid moiety-binding region" description="S-palmitoyl cysteine" evidence="1">
    <location>
        <position position="169"/>
    </location>
</feature>
<accession>Q08B31</accession>
<organism>
    <name type="scientific">Xenopus laevis</name>
    <name type="common">African clawed frog</name>
    <dbReference type="NCBI Taxonomy" id="8355"/>
    <lineage>
        <taxon>Eukaryota</taxon>
        <taxon>Metazoa</taxon>
        <taxon>Chordata</taxon>
        <taxon>Craniata</taxon>
        <taxon>Vertebrata</taxon>
        <taxon>Euteleostomi</taxon>
        <taxon>Amphibia</taxon>
        <taxon>Batrachia</taxon>
        <taxon>Anura</taxon>
        <taxon>Pipoidea</taxon>
        <taxon>Pipidae</taxon>
        <taxon>Xenopodinae</taxon>
        <taxon>Xenopus</taxon>
        <taxon>Xenopus</taxon>
    </lineage>
</organism>
<proteinExistence type="evidence at transcript level"/>
<gene>
    <name type="primary">pi4k2a</name>
</gene>
<keyword id="KW-0067">ATP-binding</keyword>
<keyword id="KW-1003">Cell membrane</keyword>
<keyword id="KW-0966">Cell projection</keyword>
<keyword id="KW-0968">Cytoplasmic vesicle</keyword>
<keyword id="KW-0967">Endosome</keyword>
<keyword id="KW-0333">Golgi apparatus</keyword>
<keyword id="KW-0418">Kinase</keyword>
<keyword id="KW-0443">Lipid metabolism</keyword>
<keyword id="KW-0449">Lipoprotein</keyword>
<keyword id="KW-0472">Membrane</keyword>
<keyword id="KW-0496">Mitochondrion</keyword>
<keyword id="KW-0547">Nucleotide-binding</keyword>
<keyword id="KW-0564">Palmitate</keyword>
<keyword id="KW-0597">Phosphoprotein</keyword>
<keyword id="KW-1185">Reference proteome</keyword>
<keyword id="KW-0770">Synapse</keyword>
<keyword id="KW-0771">Synaptosome</keyword>
<keyword id="KW-0808">Transferase</keyword>
<dbReference type="EC" id="2.7.1.67" evidence="4"/>
<dbReference type="EMBL" id="BC124897">
    <property type="protein sequence ID" value="AAI24898.1"/>
    <property type="molecule type" value="mRNA"/>
</dbReference>
<dbReference type="RefSeq" id="NP_001121279.1">
    <property type="nucleotide sequence ID" value="NM_001127807.1"/>
</dbReference>
<dbReference type="SMR" id="Q08B31"/>
<dbReference type="DNASU" id="100158362"/>
<dbReference type="GeneID" id="100158362"/>
<dbReference type="KEGG" id="xla:100158362"/>
<dbReference type="AGR" id="Xenbase:XB-GENE-866066"/>
<dbReference type="CTD" id="100158362"/>
<dbReference type="Xenbase" id="XB-GENE-866066">
    <property type="gene designation" value="pi4k2a.L"/>
</dbReference>
<dbReference type="OMA" id="IKCDCPL"/>
<dbReference type="OrthoDB" id="3349449at2759"/>
<dbReference type="Proteomes" id="UP000186698">
    <property type="component" value="Chromosome 7L"/>
</dbReference>
<dbReference type="Bgee" id="100158362">
    <property type="expression patterns" value="Expressed in spleen and 19 other cell types or tissues"/>
</dbReference>
<dbReference type="GO" id="GO:0031410">
    <property type="term" value="C:cytoplasmic vesicle"/>
    <property type="evidence" value="ECO:0000250"/>
    <property type="project" value="UniProtKB"/>
</dbReference>
<dbReference type="GO" id="GO:0030425">
    <property type="term" value="C:dendrite"/>
    <property type="evidence" value="ECO:0000250"/>
    <property type="project" value="UniProtKB"/>
</dbReference>
<dbReference type="GO" id="GO:0005768">
    <property type="term" value="C:endosome"/>
    <property type="evidence" value="ECO:0000250"/>
    <property type="project" value="UniProtKB"/>
</dbReference>
<dbReference type="GO" id="GO:0010008">
    <property type="term" value="C:endosome membrane"/>
    <property type="evidence" value="ECO:0007669"/>
    <property type="project" value="UniProtKB-SubCell"/>
</dbReference>
<dbReference type="GO" id="GO:0035838">
    <property type="term" value="C:growing cell tip"/>
    <property type="evidence" value="ECO:0000250"/>
    <property type="project" value="UniProtKB"/>
</dbReference>
<dbReference type="GO" id="GO:0005765">
    <property type="term" value="C:lysosomal membrane"/>
    <property type="evidence" value="ECO:0007669"/>
    <property type="project" value="TreeGrafter"/>
</dbReference>
<dbReference type="GO" id="GO:0016020">
    <property type="term" value="C:membrane"/>
    <property type="evidence" value="ECO:0000250"/>
    <property type="project" value="UniProtKB"/>
</dbReference>
<dbReference type="GO" id="GO:0045121">
    <property type="term" value="C:membrane raft"/>
    <property type="evidence" value="ECO:0000250"/>
    <property type="project" value="UniProtKB"/>
</dbReference>
<dbReference type="GO" id="GO:0005739">
    <property type="term" value="C:mitochondrion"/>
    <property type="evidence" value="ECO:0000250"/>
    <property type="project" value="UniProtKB"/>
</dbReference>
<dbReference type="GO" id="GO:0043005">
    <property type="term" value="C:neuron projection"/>
    <property type="evidence" value="ECO:0000250"/>
    <property type="project" value="UniProtKB"/>
</dbReference>
<dbReference type="GO" id="GO:0043025">
    <property type="term" value="C:neuronal cell body"/>
    <property type="evidence" value="ECO:0000250"/>
    <property type="project" value="UniProtKB"/>
</dbReference>
<dbReference type="GO" id="GO:0043204">
    <property type="term" value="C:perikaryon"/>
    <property type="evidence" value="ECO:0007669"/>
    <property type="project" value="UniProtKB-SubCell"/>
</dbReference>
<dbReference type="GO" id="GO:0005886">
    <property type="term" value="C:plasma membrane"/>
    <property type="evidence" value="ECO:0000250"/>
    <property type="project" value="UniProtKB"/>
</dbReference>
<dbReference type="GO" id="GO:0042734">
    <property type="term" value="C:presynaptic membrane"/>
    <property type="evidence" value="ECO:0000250"/>
    <property type="project" value="UniProtKB"/>
</dbReference>
<dbReference type="GO" id="GO:0005802">
    <property type="term" value="C:trans-Golgi network"/>
    <property type="evidence" value="ECO:0000318"/>
    <property type="project" value="GO_Central"/>
</dbReference>
<dbReference type="GO" id="GO:0004430">
    <property type="term" value="F:1-phosphatidylinositol 4-kinase activity"/>
    <property type="evidence" value="ECO:0000250"/>
    <property type="project" value="UniProtKB"/>
</dbReference>
<dbReference type="GO" id="GO:0035651">
    <property type="term" value="F:AP-3 adaptor complex binding"/>
    <property type="evidence" value="ECO:0000250"/>
    <property type="project" value="UniProtKB"/>
</dbReference>
<dbReference type="GO" id="GO:0005524">
    <property type="term" value="F:ATP binding"/>
    <property type="evidence" value="ECO:0000250"/>
    <property type="project" value="UniProtKB"/>
</dbReference>
<dbReference type="GO" id="GO:0007032">
    <property type="term" value="P:endosome organization"/>
    <property type="evidence" value="ECO:0000318"/>
    <property type="project" value="GO_Central"/>
</dbReference>
<dbReference type="GO" id="GO:0007030">
    <property type="term" value="P:Golgi organization"/>
    <property type="evidence" value="ECO:0000318"/>
    <property type="project" value="GO_Central"/>
</dbReference>
<dbReference type="GO" id="GO:0006661">
    <property type="term" value="P:phosphatidylinositol biosynthetic process"/>
    <property type="evidence" value="ECO:0000250"/>
    <property type="project" value="UniProtKB"/>
</dbReference>
<dbReference type="GO" id="GO:0046854">
    <property type="term" value="P:phosphatidylinositol phosphate biosynthetic process"/>
    <property type="evidence" value="ECO:0000250"/>
    <property type="project" value="UniProtKB"/>
</dbReference>
<dbReference type="InterPro" id="IPR039756">
    <property type="entry name" value="Lsb6/PI4K2"/>
</dbReference>
<dbReference type="InterPro" id="IPR000403">
    <property type="entry name" value="PI3/4_kinase_cat_dom"/>
</dbReference>
<dbReference type="PANTHER" id="PTHR12865:SF7">
    <property type="entry name" value="PHOSPHATIDYLINOSITOL 4-KINASE TYPE 2-ALPHA"/>
    <property type="match status" value="1"/>
</dbReference>
<dbReference type="PANTHER" id="PTHR12865">
    <property type="entry name" value="PHOSPHATIDYLINOSITOL 4-KINASE TYPE-II"/>
    <property type="match status" value="1"/>
</dbReference>
<dbReference type="Pfam" id="PF00454">
    <property type="entry name" value="PI3_PI4_kinase"/>
    <property type="match status" value="1"/>
</dbReference>
<dbReference type="PROSITE" id="PS50290">
    <property type="entry name" value="PI3_4_KINASE_3"/>
    <property type="match status" value="1"/>
</dbReference>
<evidence type="ECO:0000250" key="1"/>
<evidence type="ECO:0000250" key="2">
    <source>
        <dbReference type="UniProtKB" id="Q2TBE6"/>
    </source>
</evidence>
<evidence type="ECO:0000250" key="3">
    <source>
        <dbReference type="UniProtKB" id="Q99M64"/>
    </source>
</evidence>
<evidence type="ECO:0000250" key="4">
    <source>
        <dbReference type="UniProtKB" id="Q9BTU6"/>
    </source>
</evidence>
<evidence type="ECO:0000255" key="5">
    <source>
        <dbReference type="PROSITE-ProRule" id="PRU00269"/>
    </source>
</evidence>
<evidence type="ECO:0000256" key="6">
    <source>
        <dbReference type="SAM" id="MobiDB-lite"/>
    </source>
</evidence>
<evidence type="ECO:0000305" key="7"/>
<protein>
    <recommendedName>
        <fullName>Phosphatidylinositol 4-kinase type 2-alpha</fullName>
        <ecNumber evidence="4">2.7.1.67</ecNumber>
    </recommendedName>
    <alternativeName>
        <fullName>Phosphatidylinositol 4-kinase type II-alpha</fullName>
    </alternativeName>
</protein>
<reference key="1">
    <citation type="submission" date="2006-10" db="EMBL/GenBank/DDBJ databases">
        <authorList>
            <consortium name="NIH - Xenopus Gene Collection (XGC) project"/>
        </authorList>
    </citation>
    <scope>NUCLEOTIDE SEQUENCE [LARGE SCALE MRNA]</scope>
    <source>
        <tissue>Embryo</tissue>
    </source>
</reference>